<accession>Q49VA1</accession>
<name>Y2164_STAS1</name>
<keyword id="KW-1185">Reference proteome</keyword>
<sequence length="320" mass="35747">MKKIMITGALGQIGTELVVKCRTLYGNDNVLATDIREPEEGSALKNGPFEILDVTDKARMDELVESFKPDTMMHMAALLSATAEKNPLFAWDLNMGGLMNALEVAREYKLQFFTPSSIGAFGPSTPKVNTPQVTIQRPTSMYGVNKVAGELLCQYYFEKFGVDTRSVRFPGLISHIKEPGGGTTDYAVDIYFKAVREGQYSSFIAKDTFMDMMFMEDAINAIIQLMEADGVKLINRNAYNLSAMSIEPEMVKEAIQEYYPDFKLDYDVDPVRQSIADSWPNSIDVSCARAEWGFDPQYDLSAMTKVMLDAIEGKEKAEVK</sequence>
<comment type="similarity">
    <text evidence="1">Belongs to the NAD(P)-dependent epimerase/dehydratase family.</text>
</comment>
<feature type="chain" id="PRO_0000270854" description="Uncharacterized epimerase/dehydratase SSP2164">
    <location>
        <begin position="1"/>
        <end position="320"/>
    </location>
</feature>
<gene>
    <name type="ordered locus">SSP2164</name>
</gene>
<protein>
    <recommendedName>
        <fullName>Uncharacterized epimerase/dehydratase SSP2164</fullName>
    </recommendedName>
</protein>
<evidence type="ECO:0000305" key="1"/>
<proteinExistence type="inferred from homology"/>
<dbReference type="EMBL" id="AP008934">
    <property type="protein sequence ID" value="BAE19309.1"/>
    <property type="molecule type" value="Genomic_DNA"/>
</dbReference>
<dbReference type="RefSeq" id="WP_011303796.1">
    <property type="nucleotide sequence ID" value="NC_007350.1"/>
</dbReference>
<dbReference type="SMR" id="Q49VA1"/>
<dbReference type="GeneID" id="3616410"/>
<dbReference type="KEGG" id="ssp:SSP2164"/>
<dbReference type="PATRIC" id="fig|342451.11.peg.2155"/>
<dbReference type="eggNOG" id="COG0451">
    <property type="taxonomic scope" value="Bacteria"/>
</dbReference>
<dbReference type="HOGENOM" id="CLU_007383_19_1_9"/>
<dbReference type="OrthoDB" id="9779902at2"/>
<dbReference type="Proteomes" id="UP000006371">
    <property type="component" value="Chromosome"/>
</dbReference>
<dbReference type="GO" id="GO:0008743">
    <property type="term" value="F:L-threonine 3-dehydrogenase activity"/>
    <property type="evidence" value="ECO:0007669"/>
    <property type="project" value="TreeGrafter"/>
</dbReference>
<dbReference type="GO" id="GO:0006567">
    <property type="term" value="P:threonine catabolic process"/>
    <property type="evidence" value="ECO:0007669"/>
    <property type="project" value="TreeGrafter"/>
</dbReference>
<dbReference type="FunFam" id="3.40.50.720:FF:000077">
    <property type="entry name" value="L-threonine 3-dehydrogenase, mitochondrial"/>
    <property type="match status" value="1"/>
</dbReference>
<dbReference type="Gene3D" id="3.40.50.720">
    <property type="entry name" value="NAD(P)-binding Rossmann-like Domain"/>
    <property type="match status" value="1"/>
</dbReference>
<dbReference type="InterPro" id="IPR001509">
    <property type="entry name" value="Epimerase_deHydtase"/>
</dbReference>
<dbReference type="InterPro" id="IPR036291">
    <property type="entry name" value="NAD(P)-bd_dom_sf"/>
</dbReference>
<dbReference type="InterPro" id="IPR051225">
    <property type="entry name" value="NAD(P)_epim/dehydratase"/>
</dbReference>
<dbReference type="PANTHER" id="PTHR42687">
    <property type="entry name" value="L-THREONINE 3-DEHYDROGENASE"/>
    <property type="match status" value="1"/>
</dbReference>
<dbReference type="PANTHER" id="PTHR42687:SF1">
    <property type="entry name" value="L-THREONINE 3-DEHYDROGENASE, MITOCHONDRIAL"/>
    <property type="match status" value="1"/>
</dbReference>
<dbReference type="Pfam" id="PF01370">
    <property type="entry name" value="Epimerase"/>
    <property type="match status" value="1"/>
</dbReference>
<dbReference type="SUPFAM" id="SSF51735">
    <property type="entry name" value="NAD(P)-binding Rossmann-fold domains"/>
    <property type="match status" value="1"/>
</dbReference>
<reference key="1">
    <citation type="journal article" date="2005" name="Proc. Natl. Acad. Sci. U.S.A.">
        <title>Whole genome sequence of Staphylococcus saprophyticus reveals the pathogenesis of uncomplicated urinary tract infection.</title>
        <authorList>
            <person name="Kuroda M."/>
            <person name="Yamashita A."/>
            <person name="Hirakawa H."/>
            <person name="Kumano M."/>
            <person name="Morikawa K."/>
            <person name="Higashide M."/>
            <person name="Maruyama A."/>
            <person name="Inose Y."/>
            <person name="Matoba K."/>
            <person name="Toh H."/>
            <person name="Kuhara S."/>
            <person name="Hattori M."/>
            <person name="Ohta T."/>
        </authorList>
    </citation>
    <scope>NUCLEOTIDE SEQUENCE [LARGE SCALE GENOMIC DNA]</scope>
    <source>
        <strain>ATCC 15305 / DSM 20229 / NCIMB 8711 / NCTC 7292 / S-41</strain>
    </source>
</reference>
<organism>
    <name type="scientific">Staphylococcus saprophyticus subsp. saprophyticus (strain ATCC 15305 / DSM 20229 / NCIMB 8711 / NCTC 7292 / S-41)</name>
    <dbReference type="NCBI Taxonomy" id="342451"/>
    <lineage>
        <taxon>Bacteria</taxon>
        <taxon>Bacillati</taxon>
        <taxon>Bacillota</taxon>
        <taxon>Bacilli</taxon>
        <taxon>Bacillales</taxon>
        <taxon>Staphylococcaceae</taxon>
        <taxon>Staphylococcus</taxon>
    </lineage>
</organism>